<organism>
    <name type="scientific">Treponema pallidum (strain Nichols)</name>
    <dbReference type="NCBI Taxonomy" id="243276"/>
    <lineage>
        <taxon>Bacteria</taxon>
        <taxon>Pseudomonadati</taxon>
        <taxon>Spirochaetota</taxon>
        <taxon>Spirochaetia</taxon>
        <taxon>Spirochaetales</taxon>
        <taxon>Treponemataceae</taxon>
        <taxon>Treponema</taxon>
    </lineage>
</organism>
<proteinExistence type="predicted"/>
<reference key="1">
    <citation type="journal article" date="1998" name="Science">
        <title>Complete genome sequence of Treponema pallidum, the syphilis spirochete.</title>
        <authorList>
            <person name="Fraser C.M."/>
            <person name="Norris S.J."/>
            <person name="Weinstock G.M."/>
            <person name="White O."/>
            <person name="Sutton G.G."/>
            <person name="Dodson R.J."/>
            <person name="Gwinn M.L."/>
            <person name="Hickey E.K."/>
            <person name="Clayton R.A."/>
            <person name="Ketchum K.A."/>
            <person name="Sodergren E."/>
            <person name="Hardham J.M."/>
            <person name="McLeod M.P."/>
            <person name="Salzberg S.L."/>
            <person name="Peterson J.D."/>
            <person name="Khalak H.G."/>
            <person name="Richardson D.L."/>
            <person name="Howell J.K."/>
            <person name="Chidambaram M."/>
            <person name="Utterback T.R."/>
            <person name="McDonald L.A."/>
            <person name="Artiach P."/>
            <person name="Bowman C."/>
            <person name="Cotton M.D."/>
            <person name="Fujii C."/>
            <person name="Garland S.A."/>
            <person name="Hatch B."/>
            <person name="Horst K."/>
            <person name="Roberts K.M."/>
            <person name="Sandusky M."/>
            <person name="Weidman J.F."/>
            <person name="Smith H.O."/>
            <person name="Venter J.C."/>
        </authorList>
    </citation>
    <scope>NUCLEOTIDE SEQUENCE [LARGE SCALE GENOMIC DNA]</scope>
    <source>
        <strain>Nichols</strain>
    </source>
</reference>
<sequence length="56" mass="6479">MSYDFTQYQRPSGRLLARKDFLHVVAVRDAPHDGKYAVEVPVHVTRTCLILLPRKI</sequence>
<feature type="chain" id="PRO_0000202369" description="Uncharacterized protein TP_0987">
    <location>
        <begin position="1"/>
        <end position="56"/>
    </location>
</feature>
<dbReference type="EMBL" id="AE000520">
    <property type="protein sequence ID" value="AAC65950.1"/>
    <property type="molecule type" value="Genomic_DNA"/>
</dbReference>
<dbReference type="PIR" id="C71256">
    <property type="entry name" value="C71256"/>
</dbReference>
<dbReference type="IntAct" id="O83952">
    <property type="interactions" value="2"/>
</dbReference>
<dbReference type="EnsemblBacteria" id="AAC65950">
    <property type="protein sequence ID" value="AAC65950"/>
    <property type="gene ID" value="TP_0987"/>
</dbReference>
<dbReference type="KEGG" id="tpa:TP_0987"/>
<dbReference type="KEGG" id="tpw:TPANIC_0987"/>
<dbReference type="HOGENOM" id="CLU_3012965_0_0_12"/>
<dbReference type="Proteomes" id="UP000000811">
    <property type="component" value="Chromosome"/>
</dbReference>
<keyword id="KW-1185">Reference proteome</keyword>
<protein>
    <recommendedName>
        <fullName>Uncharacterized protein TP_0987</fullName>
    </recommendedName>
</protein>
<name>Y987_TREPA</name>
<gene>
    <name type="ordered locus">TP_0987</name>
</gene>
<accession>O83952</accession>